<evidence type="ECO:0000250" key="1"/>
<evidence type="ECO:0000250" key="2">
    <source>
        <dbReference type="UniProtKB" id="P18893"/>
    </source>
</evidence>
<evidence type="ECO:0000250" key="3">
    <source>
        <dbReference type="UniProtKB" id="P22301"/>
    </source>
</evidence>
<evidence type="ECO:0000255" key="4"/>
<evidence type="ECO:0000305" key="5"/>
<keyword id="KW-0202">Cytokine</keyword>
<keyword id="KW-1015">Disulfide bond</keyword>
<keyword id="KW-0325">Glycoprotein</keyword>
<keyword id="KW-1185">Reference proteome</keyword>
<keyword id="KW-0964">Secreted</keyword>
<keyword id="KW-0732">Signal</keyword>
<sequence length="178" mass="20438">MHSSALLCCLVFLAGVAASRDASTLSDSSCIHLPTSLPHMLRELRAAFGKVKTFFQMKDQLHSLLLTQSLLDDFKGYLGCQALSEMIQFYLEEVMPQAENHGPDIKEHVNSLGEKLKTLRLRLRRCHRFLPCENKSKAVEKVKRVFSELQERGVYKAMSEFDIFINYIETYMTTKMQK</sequence>
<protein>
    <recommendedName>
        <fullName>Interleukin-10</fullName>
        <shortName>IL-10</shortName>
    </recommendedName>
    <alternativeName>
        <fullName>Cytokine synthesis inhibitory factor</fullName>
        <shortName>CSIF</shortName>
    </alternativeName>
</protein>
<reference key="1">
    <citation type="journal article" date="1994" name="Gene">
        <title>Characterization of a cDNA encoding bovine interleukin 10: kinetics of expression in bovine lymphocytes.</title>
        <authorList>
            <person name="Hash S.M."/>
            <person name="Brown W.C."/>
            <person name="Rice-Ficht A.C."/>
        </authorList>
    </citation>
    <scope>NUCLEOTIDE SEQUENCE [MRNA]</scope>
    <source>
        <strain>Charolais</strain>
        <tissue>Blood</tissue>
    </source>
</reference>
<reference key="2">
    <citation type="submission" date="2007-11" db="EMBL/GenBank/DDBJ databases">
        <title>U.S. veterinary immune reagent network: expressed bovine gene sequences.</title>
        <authorList>
            <consortium name="U.S. Veterinary Immune Reagent Network"/>
            <person name="Hudgens T."/>
            <person name="Tompkins D."/>
            <person name="Baldwin C.L."/>
        </authorList>
    </citation>
    <scope>NUCLEOTIDE SEQUENCE [LARGE SCALE MRNA]</scope>
    <source>
        <strain>Belted Galloway</strain>
        <tissue>Peripheral blood</tissue>
    </source>
</reference>
<accession>P43480</accession>
<accession>A9QWR2</accession>
<proteinExistence type="evidence at transcript level"/>
<dbReference type="EMBL" id="U00799">
    <property type="protein sequence ID" value="AAA19011.1"/>
    <property type="molecule type" value="mRNA"/>
</dbReference>
<dbReference type="EMBL" id="EU276074">
    <property type="protein sequence ID" value="ABX72072.1"/>
    <property type="molecule type" value="mRNA"/>
</dbReference>
<dbReference type="RefSeq" id="NP_776513.1">
    <property type="nucleotide sequence ID" value="NM_174088.1"/>
</dbReference>
<dbReference type="SMR" id="P43480"/>
<dbReference type="FunCoup" id="P43480">
    <property type="interactions" value="359"/>
</dbReference>
<dbReference type="STRING" id="9913.ENSBTAP00000059310"/>
<dbReference type="GlyCosmos" id="P43480">
    <property type="glycosylation" value="1 site, No reported glycans"/>
</dbReference>
<dbReference type="GlyGen" id="P43480">
    <property type="glycosylation" value="1 site"/>
</dbReference>
<dbReference type="PaxDb" id="9913-ENSBTAP00000008793"/>
<dbReference type="GeneID" id="281246"/>
<dbReference type="KEGG" id="bta:281246"/>
<dbReference type="CTD" id="3586"/>
<dbReference type="eggNOG" id="ENOG502S22U">
    <property type="taxonomic scope" value="Eukaryota"/>
</dbReference>
<dbReference type="InParanoid" id="P43480"/>
<dbReference type="OrthoDB" id="9931894at2759"/>
<dbReference type="Proteomes" id="UP000009136">
    <property type="component" value="Unplaced"/>
</dbReference>
<dbReference type="GO" id="GO:0005615">
    <property type="term" value="C:extracellular space"/>
    <property type="evidence" value="ECO:0000250"/>
    <property type="project" value="UniProtKB"/>
</dbReference>
<dbReference type="GO" id="GO:0005125">
    <property type="term" value="F:cytokine activity"/>
    <property type="evidence" value="ECO:0000318"/>
    <property type="project" value="GO_Central"/>
</dbReference>
<dbReference type="GO" id="GO:0006955">
    <property type="term" value="P:immune response"/>
    <property type="evidence" value="ECO:0000318"/>
    <property type="project" value="GO_Central"/>
</dbReference>
<dbReference type="GO" id="GO:0140105">
    <property type="term" value="P:interleukin-10-mediated signaling pathway"/>
    <property type="evidence" value="ECO:0000318"/>
    <property type="project" value="GO_Central"/>
</dbReference>
<dbReference type="GO" id="GO:0030889">
    <property type="term" value="P:negative regulation of B cell proliferation"/>
    <property type="evidence" value="ECO:0000250"/>
    <property type="project" value="UniProtKB"/>
</dbReference>
<dbReference type="GO" id="GO:0002719">
    <property type="term" value="P:negative regulation of cytokine production involved in immune response"/>
    <property type="evidence" value="ECO:0000250"/>
    <property type="project" value="UniProtKB"/>
</dbReference>
<dbReference type="GO" id="GO:0050728">
    <property type="term" value="P:negative regulation of inflammatory response"/>
    <property type="evidence" value="ECO:0000250"/>
    <property type="project" value="UniProtKB"/>
</dbReference>
<dbReference type="GO" id="GO:0032715">
    <property type="term" value="P:negative regulation of interleukin-6 production"/>
    <property type="evidence" value="ECO:0000250"/>
    <property type="project" value="UniProtKB"/>
</dbReference>
<dbReference type="GO" id="GO:0051045">
    <property type="term" value="P:negative regulation of membrane protein ectodomain proteolysis"/>
    <property type="evidence" value="ECO:0000250"/>
    <property type="project" value="UniProtKB"/>
</dbReference>
<dbReference type="GO" id="GO:0045019">
    <property type="term" value="P:negative regulation of nitric oxide biosynthetic process"/>
    <property type="evidence" value="ECO:0000303"/>
    <property type="project" value="UniProtKB"/>
</dbReference>
<dbReference type="GO" id="GO:0032689">
    <property type="term" value="P:negative regulation of type II interferon production"/>
    <property type="evidence" value="ECO:0000303"/>
    <property type="project" value="UniProtKB"/>
</dbReference>
<dbReference type="GO" id="GO:0002904">
    <property type="term" value="P:positive regulation of B cell apoptotic process"/>
    <property type="evidence" value="ECO:0000250"/>
    <property type="project" value="UniProtKB"/>
</dbReference>
<dbReference type="GO" id="GO:0001819">
    <property type="term" value="P:positive regulation of cytokine production"/>
    <property type="evidence" value="ECO:0000250"/>
    <property type="project" value="UniProtKB"/>
</dbReference>
<dbReference type="GO" id="GO:0051091">
    <property type="term" value="P:positive regulation of DNA-binding transcription factor activity"/>
    <property type="evidence" value="ECO:0000250"/>
    <property type="project" value="UniProtKB"/>
</dbReference>
<dbReference type="GO" id="GO:0045893">
    <property type="term" value="P:positive regulation of DNA-templated transcription"/>
    <property type="evidence" value="ECO:0000250"/>
    <property type="project" value="UniProtKB"/>
</dbReference>
<dbReference type="GO" id="GO:0046427">
    <property type="term" value="P:positive regulation of receptor signaling pathway via JAK-STAT"/>
    <property type="evidence" value="ECO:0000318"/>
    <property type="project" value="GO_Central"/>
</dbReference>
<dbReference type="GO" id="GO:0032729">
    <property type="term" value="P:positive regulation of type II interferon production"/>
    <property type="evidence" value="ECO:0000315"/>
    <property type="project" value="UniProtKB"/>
</dbReference>
<dbReference type="GO" id="GO:0051384">
    <property type="term" value="P:response to glucocorticoid"/>
    <property type="evidence" value="ECO:0000250"/>
    <property type="project" value="UniProtKB"/>
</dbReference>
<dbReference type="GO" id="GO:0002237">
    <property type="term" value="P:response to molecule of bacterial origin"/>
    <property type="evidence" value="ECO:0000250"/>
    <property type="project" value="UniProtKB"/>
</dbReference>
<dbReference type="FunFam" id="1.20.1250.10:FF:000011">
    <property type="entry name" value="Interleukin-10"/>
    <property type="match status" value="1"/>
</dbReference>
<dbReference type="Gene3D" id="1.20.1250.10">
    <property type="match status" value="1"/>
</dbReference>
<dbReference type="InterPro" id="IPR009079">
    <property type="entry name" value="4_helix_cytokine-like_core"/>
</dbReference>
<dbReference type="InterPro" id="IPR000098">
    <property type="entry name" value="IL-10"/>
</dbReference>
<dbReference type="InterPro" id="IPR020443">
    <property type="entry name" value="IL-10/19/20/24/26"/>
</dbReference>
<dbReference type="InterPro" id="IPR020423">
    <property type="entry name" value="IL-10_CS"/>
</dbReference>
<dbReference type="PANTHER" id="PTHR48482:SF5">
    <property type="entry name" value="INTERLEUKIN-10"/>
    <property type="match status" value="1"/>
</dbReference>
<dbReference type="PANTHER" id="PTHR48482">
    <property type="entry name" value="INTERLEUKIN-19-RELATED"/>
    <property type="match status" value="1"/>
</dbReference>
<dbReference type="Pfam" id="PF00726">
    <property type="entry name" value="IL10"/>
    <property type="match status" value="1"/>
</dbReference>
<dbReference type="PRINTS" id="PR01294">
    <property type="entry name" value="INTRLEUKIN10"/>
</dbReference>
<dbReference type="SMART" id="SM00188">
    <property type="entry name" value="IL10"/>
    <property type="match status" value="1"/>
</dbReference>
<dbReference type="SUPFAM" id="SSF47266">
    <property type="entry name" value="4-helical cytokines"/>
    <property type="match status" value="1"/>
</dbReference>
<dbReference type="PROSITE" id="PS00520">
    <property type="entry name" value="INTERLEUKIN_10"/>
    <property type="match status" value="1"/>
</dbReference>
<organism>
    <name type="scientific">Bos taurus</name>
    <name type="common">Bovine</name>
    <dbReference type="NCBI Taxonomy" id="9913"/>
    <lineage>
        <taxon>Eukaryota</taxon>
        <taxon>Metazoa</taxon>
        <taxon>Chordata</taxon>
        <taxon>Craniata</taxon>
        <taxon>Vertebrata</taxon>
        <taxon>Euteleostomi</taxon>
        <taxon>Mammalia</taxon>
        <taxon>Eutheria</taxon>
        <taxon>Laurasiatheria</taxon>
        <taxon>Artiodactyla</taxon>
        <taxon>Ruminantia</taxon>
        <taxon>Pecora</taxon>
        <taxon>Bovidae</taxon>
        <taxon>Bovinae</taxon>
        <taxon>Bos</taxon>
    </lineage>
</organism>
<feature type="signal peptide" evidence="4">
    <location>
        <begin position="1"/>
        <end position="18"/>
    </location>
</feature>
<feature type="chain" id="PRO_0000015353" description="Interleukin-10">
    <location>
        <begin position="19"/>
        <end position="178"/>
    </location>
</feature>
<feature type="glycosylation site" description="N-linked (GlcNAc...) asparagine" evidence="4">
    <location>
        <position position="134"/>
    </location>
</feature>
<feature type="disulfide bond" evidence="1">
    <location>
        <begin position="30"/>
        <end position="126"/>
    </location>
</feature>
<feature type="disulfide bond" evidence="1">
    <location>
        <begin position="80"/>
        <end position="132"/>
    </location>
</feature>
<feature type="sequence conflict" description="In Ref. 1; AAA19011." evidence="5" ref="1">
    <original>KV</original>
    <variation>EA</variation>
    <location>
        <begin position="50"/>
        <end position="51"/>
    </location>
</feature>
<comment type="function">
    <text evidence="2 3">Major immune regulatory cytokine that acts on many cells of the immune system where it has profound anti-inflammatory functions, limiting excessive tissue disruption caused by inflammation. Mechanistically, IL10 binds to its heterotetrameric receptor comprising IL10RA and IL10RB leading to JAK1 and STAT2-mediated phosphorylation of STAT3. In turn, STAT3 translocates to the nucleus where it drives expression of anti-inflammatory mediators. Targets antigen-presenting cells (APCs) such as macrophages and monocytes and inhibits their release of pro-inflammatory cytokines including granulocyte-macrophage colony-stimulating factor /GM-CSF, granulocyte colony-stimulating factor/G-CSF, IL-1 alpha, IL-1 beta, IL-6, IL-8 and TNF-alpha. Also interferes with antigen presentation by reducing the expression of MHC-class II and co-stimulatory molecules, thereby inhibiting their ability to induce T cell activation (By similarity). In addition, controls the inflammatory response of macrophages by reprogramming essential metabolic pathways including mTOR signaling (By similarity).</text>
</comment>
<comment type="subunit">
    <text evidence="3">Homodimer. Interacts with IL10RA and IL10RB.</text>
</comment>
<comment type="subcellular location">
    <subcellularLocation>
        <location evidence="3">Secreted</location>
    </subcellularLocation>
</comment>
<comment type="similarity">
    <text evidence="5">Belongs to the IL-10 family.</text>
</comment>
<gene>
    <name type="primary">IL10</name>
</gene>
<name>IL10_BOVIN</name>